<proteinExistence type="inferred from homology"/>
<gene>
    <name evidence="1" type="primary">rplU</name>
    <name type="ordered locus">SpyM3_0552</name>
</gene>
<protein>
    <recommendedName>
        <fullName evidence="1">Large ribosomal subunit protein bL21</fullName>
    </recommendedName>
    <alternativeName>
        <fullName evidence="2">50S ribosomal protein L21</fullName>
    </alternativeName>
</protein>
<comment type="function">
    <text evidence="1">This protein binds to 23S rRNA in the presence of protein L20.</text>
</comment>
<comment type="subunit">
    <text evidence="1">Part of the 50S ribosomal subunit. Contacts protein L20.</text>
</comment>
<comment type="similarity">
    <text evidence="1">Belongs to the bacterial ribosomal protein bL21 family.</text>
</comment>
<accession>P0DE20</accession>
<accession>Q79WT5</accession>
<accession>Q7CF92</accession>
<evidence type="ECO:0000255" key="1">
    <source>
        <dbReference type="HAMAP-Rule" id="MF_01363"/>
    </source>
</evidence>
<evidence type="ECO:0000305" key="2"/>
<organism>
    <name type="scientific">Streptococcus pyogenes serotype M3 (strain ATCC BAA-595 / MGAS315)</name>
    <dbReference type="NCBI Taxonomy" id="198466"/>
    <lineage>
        <taxon>Bacteria</taxon>
        <taxon>Bacillati</taxon>
        <taxon>Bacillota</taxon>
        <taxon>Bacilli</taxon>
        <taxon>Lactobacillales</taxon>
        <taxon>Streptococcaceae</taxon>
        <taxon>Streptococcus</taxon>
    </lineage>
</organism>
<feature type="chain" id="PRO_0000269399" description="Large ribosomal subunit protein bL21">
    <location>
        <begin position="1"/>
        <end position="104"/>
    </location>
</feature>
<keyword id="KW-0687">Ribonucleoprotein</keyword>
<keyword id="KW-0689">Ribosomal protein</keyword>
<keyword id="KW-0694">RNA-binding</keyword>
<keyword id="KW-0699">rRNA-binding</keyword>
<reference key="1">
    <citation type="journal article" date="2002" name="Proc. Natl. Acad. Sci. U.S.A.">
        <title>Genome sequence of a serotype M3 strain of group A Streptococcus: phage-encoded toxins, the high-virulence phenotype, and clone emergence.</title>
        <authorList>
            <person name="Beres S.B."/>
            <person name="Sylva G.L."/>
            <person name="Barbian K.D."/>
            <person name="Lei B."/>
            <person name="Hoff J.S."/>
            <person name="Mammarella N.D."/>
            <person name="Liu M.-Y."/>
            <person name="Smoot J.C."/>
            <person name="Porcella S.F."/>
            <person name="Parkins L.D."/>
            <person name="Campbell D.S."/>
            <person name="Smith T.M."/>
            <person name="McCormick J.K."/>
            <person name="Leung D.Y.M."/>
            <person name="Schlievert P.M."/>
            <person name="Musser J.M."/>
        </authorList>
    </citation>
    <scope>NUCLEOTIDE SEQUENCE [LARGE SCALE GENOMIC DNA]</scope>
    <source>
        <strain>ATCC BAA-595 / MGAS315</strain>
    </source>
</reference>
<dbReference type="EMBL" id="AE014074">
    <property type="protein sequence ID" value="AAM79159.1"/>
    <property type="molecule type" value="Genomic_DNA"/>
</dbReference>
<dbReference type="RefSeq" id="WP_002985116.1">
    <property type="nucleotide sequence ID" value="NC_004070.1"/>
</dbReference>
<dbReference type="SMR" id="P0DE20"/>
<dbReference type="GeneID" id="83690429"/>
<dbReference type="KEGG" id="spg:SpyM3_0552"/>
<dbReference type="HOGENOM" id="CLU_061463_3_1_9"/>
<dbReference type="Proteomes" id="UP000000564">
    <property type="component" value="Chromosome"/>
</dbReference>
<dbReference type="GO" id="GO:0005737">
    <property type="term" value="C:cytoplasm"/>
    <property type="evidence" value="ECO:0007669"/>
    <property type="project" value="UniProtKB-ARBA"/>
</dbReference>
<dbReference type="GO" id="GO:1990904">
    <property type="term" value="C:ribonucleoprotein complex"/>
    <property type="evidence" value="ECO:0007669"/>
    <property type="project" value="UniProtKB-KW"/>
</dbReference>
<dbReference type="GO" id="GO:0005840">
    <property type="term" value="C:ribosome"/>
    <property type="evidence" value="ECO:0007669"/>
    <property type="project" value="UniProtKB-KW"/>
</dbReference>
<dbReference type="GO" id="GO:0019843">
    <property type="term" value="F:rRNA binding"/>
    <property type="evidence" value="ECO:0007669"/>
    <property type="project" value="UniProtKB-UniRule"/>
</dbReference>
<dbReference type="GO" id="GO:0003735">
    <property type="term" value="F:structural constituent of ribosome"/>
    <property type="evidence" value="ECO:0007669"/>
    <property type="project" value="InterPro"/>
</dbReference>
<dbReference type="GO" id="GO:0006412">
    <property type="term" value="P:translation"/>
    <property type="evidence" value="ECO:0007669"/>
    <property type="project" value="UniProtKB-UniRule"/>
</dbReference>
<dbReference type="HAMAP" id="MF_01363">
    <property type="entry name" value="Ribosomal_bL21"/>
    <property type="match status" value="1"/>
</dbReference>
<dbReference type="InterPro" id="IPR028909">
    <property type="entry name" value="bL21-like"/>
</dbReference>
<dbReference type="InterPro" id="IPR036164">
    <property type="entry name" value="bL21-like_sf"/>
</dbReference>
<dbReference type="InterPro" id="IPR001787">
    <property type="entry name" value="Ribosomal_bL21"/>
</dbReference>
<dbReference type="InterPro" id="IPR018258">
    <property type="entry name" value="Ribosomal_bL21_CS"/>
</dbReference>
<dbReference type="NCBIfam" id="TIGR00061">
    <property type="entry name" value="L21"/>
    <property type="match status" value="1"/>
</dbReference>
<dbReference type="PANTHER" id="PTHR21349">
    <property type="entry name" value="50S RIBOSOMAL PROTEIN L21"/>
    <property type="match status" value="1"/>
</dbReference>
<dbReference type="PANTHER" id="PTHR21349:SF0">
    <property type="entry name" value="LARGE RIBOSOMAL SUBUNIT PROTEIN BL21M"/>
    <property type="match status" value="1"/>
</dbReference>
<dbReference type="Pfam" id="PF00829">
    <property type="entry name" value="Ribosomal_L21p"/>
    <property type="match status" value="1"/>
</dbReference>
<dbReference type="SUPFAM" id="SSF141091">
    <property type="entry name" value="L21p-like"/>
    <property type="match status" value="1"/>
</dbReference>
<dbReference type="PROSITE" id="PS01169">
    <property type="entry name" value="RIBOSOMAL_L21"/>
    <property type="match status" value="1"/>
</dbReference>
<sequence>MSTYAIIKTGGKQVKVEVGQAIYVEKIDAEAGAEVTFNEVVLVGGDKTVVGTPVVEGATVVGTVEKQGKQKKVVTFKYKPKKGSHRKQGHRQPYTKVVINAINA</sequence>
<name>RL21_STRP3</name>